<comment type="function">
    <text evidence="1">Necessary for normal cell division and for the maintenance of normal septation.</text>
</comment>
<comment type="cofactor">
    <cofactor evidence="1">
        <name>Mg(2+)</name>
        <dbReference type="ChEBI" id="CHEBI:18420"/>
    </cofactor>
</comment>
<comment type="similarity">
    <text evidence="1">Belongs to the TRAFAC class TrmE-Era-EngA-EngB-Septin-like GTPase superfamily. EngB GTPase family.</text>
</comment>
<name>ENGB_STRA1</name>
<gene>
    <name evidence="1" type="primary">engB</name>
    <name type="ordered locus">SAK_1342</name>
</gene>
<dbReference type="EMBL" id="CP000114">
    <property type="protein sequence ID" value="ABA45326.1"/>
    <property type="molecule type" value="Genomic_DNA"/>
</dbReference>
<dbReference type="SMR" id="Q3K0K1"/>
<dbReference type="KEGG" id="sak:SAK_1342"/>
<dbReference type="HOGENOM" id="CLU_033732_3_0_9"/>
<dbReference type="GO" id="GO:0005829">
    <property type="term" value="C:cytosol"/>
    <property type="evidence" value="ECO:0007669"/>
    <property type="project" value="TreeGrafter"/>
</dbReference>
<dbReference type="GO" id="GO:0005525">
    <property type="term" value="F:GTP binding"/>
    <property type="evidence" value="ECO:0007669"/>
    <property type="project" value="UniProtKB-UniRule"/>
</dbReference>
<dbReference type="GO" id="GO:0046872">
    <property type="term" value="F:metal ion binding"/>
    <property type="evidence" value="ECO:0007669"/>
    <property type="project" value="UniProtKB-KW"/>
</dbReference>
<dbReference type="GO" id="GO:0000917">
    <property type="term" value="P:division septum assembly"/>
    <property type="evidence" value="ECO:0007669"/>
    <property type="project" value="UniProtKB-KW"/>
</dbReference>
<dbReference type="CDD" id="cd01876">
    <property type="entry name" value="YihA_EngB"/>
    <property type="match status" value="1"/>
</dbReference>
<dbReference type="FunFam" id="3.40.50.300:FF:000098">
    <property type="entry name" value="Probable GTP-binding protein EngB"/>
    <property type="match status" value="1"/>
</dbReference>
<dbReference type="Gene3D" id="3.40.50.300">
    <property type="entry name" value="P-loop containing nucleotide triphosphate hydrolases"/>
    <property type="match status" value="1"/>
</dbReference>
<dbReference type="HAMAP" id="MF_00321">
    <property type="entry name" value="GTPase_EngB"/>
    <property type="match status" value="1"/>
</dbReference>
<dbReference type="InterPro" id="IPR030393">
    <property type="entry name" value="G_ENGB_dom"/>
</dbReference>
<dbReference type="InterPro" id="IPR006073">
    <property type="entry name" value="GTP-bd"/>
</dbReference>
<dbReference type="InterPro" id="IPR019987">
    <property type="entry name" value="GTP-bd_ribosome_bio_YsxC"/>
</dbReference>
<dbReference type="InterPro" id="IPR027417">
    <property type="entry name" value="P-loop_NTPase"/>
</dbReference>
<dbReference type="InterPro" id="IPR005225">
    <property type="entry name" value="Small_GTP-bd"/>
</dbReference>
<dbReference type="NCBIfam" id="TIGR03598">
    <property type="entry name" value="GTPase_YsxC"/>
    <property type="match status" value="1"/>
</dbReference>
<dbReference type="NCBIfam" id="TIGR00231">
    <property type="entry name" value="small_GTP"/>
    <property type="match status" value="1"/>
</dbReference>
<dbReference type="PANTHER" id="PTHR11649:SF13">
    <property type="entry name" value="ENGB-TYPE G DOMAIN-CONTAINING PROTEIN"/>
    <property type="match status" value="1"/>
</dbReference>
<dbReference type="PANTHER" id="PTHR11649">
    <property type="entry name" value="MSS1/TRME-RELATED GTP-BINDING PROTEIN"/>
    <property type="match status" value="1"/>
</dbReference>
<dbReference type="Pfam" id="PF01926">
    <property type="entry name" value="MMR_HSR1"/>
    <property type="match status" value="1"/>
</dbReference>
<dbReference type="SUPFAM" id="SSF52540">
    <property type="entry name" value="P-loop containing nucleoside triphosphate hydrolases"/>
    <property type="match status" value="1"/>
</dbReference>
<dbReference type="PROSITE" id="PS51706">
    <property type="entry name" value="G_ENGB"/>
    <property type="match status" value="1"/>
</dbReference>
<feature type="chain" id="PRO_0000266960" description="Probable GTP-binding protein EngB">
    <location>
        <begin position="1"/>
        <end position="198"/>
    </location>
</feature>
<feature type="domain" description="EngB-type G" evidence="1">
    <location>
        <begin position="27"/>
        <end position="198"/>
    </location>
</feature>
<feature type="binding site" evidence="1">
    <location>
        <begin position="35"/>
        <end position="42"/>
    </location>
    <ligand>
        <name>GTP</name>
        <dbReference type="ChEBI" id="CHEBI:37565"/>
    </ligand>
</feature>
<feature type="binding site" evidence="1">
    <location>
        <position position="42"/>
    </location>
    <ligand>
        <name>Mg(2+)</name>
        <dbReference type="ChEBI" id="CHEBI:18420"/>
    </ligand>
</feature>
<feature type="binding site" evidence="1">
    <location>
        <begin position="62"/>
        <end position="66"/>
    </location>
    <ligand>
        <name>GTP</name>
        <dbReference type="ChEBI" id="CHEBI:37565"/>
    </ligand>
</feature>
<feature type="binding site" evidence="1">
    <location>
        <position position="64"/>
    </location>
    <ligand>
        <name>Mg(2+)</name>
        <dbReference type="ChEBI" id="CHEBI:18420"/>
    </ligand>
</feature>
<feature type="binding site" evidence="1">
    <location>
        <begin position="80"/>
        <end position="83"/>
    </location>
    <ligand>
        <name>GTP</name>
        <dbReference type="ChEBI" id="CHEBI:37565"/>
    </ligand>
</feature>
<feature type="binding site" evidence="1">
    <location>
        <begin position="147"/>
        <end position="150"/>
    </location>
    <ligand>
        <name>GTP</name>
        <dbReference type="ChEBI" id="CHEBI:37565"/>
    </ligand>
</feature>
<feature type="binding site" evidence="1">
    <location>
        <begin position="179"/>
        <end position="181"/>
    </location>
    <ligand>
        <name>GTP</name>
        <dbReference type="ChEBI" id="CHEBI:37565"/>
    </ligand>
</feature>
<reference key="1">
    <citation type="journal article" date="2005" name="Proc. Natl. Acad. Sci. U.S.A.">
        <title>Genome analysis of multiple pathogenic isolates of Streptococcus agalactiae: implications for the microbial 'pan-genome'.</title>
        <authorList>
            <person name="Tettelin H."/>
            <person name="Masignani V."/>
            <person name="Cieslewicz M.J."/>
            <person name="Donati C."/>
            <person name="Medini D."/>
            <person name="Ward N.L."/>
            <person name="Angiuoli S.V."/>
            <person name="Crabtree J."/>
            <person name="Jones A.L."/>
            <person name="Durkin A.S."/>
            <person name="DeBoy R.T."/>
            <person name="Davidsen T.M."/>
            <person name="Mora M."/>
            <person name="Scarselli M."/>
            <person name="Margarit y Ros I."/>
            <person name="Peterson J.D."/>
            <person name="Hauser C.R."/>
            <person name="Sundaram J.P."/>
            <person name="Nelson W.C."/>
            <person name="Madupu R."/>
            <person name="Brinkac L.M."/>
            <person name="Dodson R.J."/>
            <person name="Rosovitz M.J."/>
            <person name="Sullivan S.A."/>
            <person name="Daugherty S.C."/>
            <person name="Haft D.H."/>
            <person name="Selengut J."/>
            <person name="Gwinn M.L."/>
            <person name="Zhou L."/>
            <person name="Zafar N."/>
            <person name="Khouri H."/>
            <person name="Radune D."/>
            <person name="Dimitrov G."/>
            <person name="Watkins K."/>
            <person name="O'Connor K.J."/>
            <person name="Smith S."/>
            <person name="Utterback T.R."/>
            <person name="White O."/>
            <person name="Rubens C.E."/>
            <person name="Grandi G."/>
            <person name="Madoff L.C."/>
            <person name="Kasper D.L."/>
            <person name="Telford J.L."/>
            <person name="Wessels M.R."/>
            <person name="Rappuoli R."/>
            <person name="Fraser C.M."/>
        </authorList>
    </citation>
    <scope>NUCLEOTIDE SEQUENCE [LARGE SCALE GENOMIC DNA]</scope>
    <source>
        <strain>ATCC 27591 / A909 / CDC SS700</strain>
    </source>
</reference>
<accession>Q3K0K1</accession>
<sequence length="198" mass="22645">MAEEFLNTHNASILLSAANKSHYPQDDLPEVALAGRSNVGKSSFINTLLGRKNLARTSSKPGKTQLLNFYNIDDKLRFVDVPGYGYAKVSKTERAKWGKMIEEYLVTRDNLRVVVSLVDFRHDPSADDIQMYEFLKYYEIPVIIVATKADKIPRGKWNKHESSIKKKLNFDKKDHFIVFSSVDRTGLDESWDTILSEL</sequence>
<evidence type="ECO:0000255" key="1">
    <source>
        <dbReference type="HAMAP-Rule" id="MF_00321"/>
    </source>
</evidence>
<keyword id="KW-0131">Cell cycle</keyword>
<keyword id="KW-0132">Cell division</keyword>
<keyword id="KW-0342">GTP-binding</keyword>
<keyword id="KW-0460">Magnesium</keyword>
<keyword id="KW-0479">Metal-binding</keyword>
<keyword id="KW-0547">Nucleotide-binding</keyword>
<keyword id="KW-0717">Septation</keyword>
<proteinExistence type="inferred from homology"/>
<organism>
    <name type="scientific">Streptococcus agalactiae serotype Ia (strain ATCC 27591 / A909 / CDC SS700)</name>
    <dbReference type="NCBI Taxonomy" id="205921"/>
    <lineage>
        <taxon>Bacteria</taxon>
        <taxon>Bacillati</taxon>
        <taxon>Bacillota</taxon>
        <taxon>Bacilli</taxon>
        <taxon>Lactobacillales</taxon>
        <taxon>Streptococcaceae</taxon>
        <taxon>Streptococcus</taxon>
    </lineage>
</organism>
<protein>
    <recommendedName>
        <fullName evidence="1">Probable GTP-binding protein EngB</fullName>
    </recommendedName>
</protein>